<organismHost>
    <name type="scientific">Cynomys gunnisoni</name>
    <name type="common">Gunnison's prairie dog</name>
    <name type="synonym">Spermophilus gunnisoni</name>
    <dbReference type="NCBI Taxonomy" id="45479"/>
</organismHost>
<organismHost>
    <name type="scientific">Cynomys leucurus</name>
    <name type="common">White-tailed prairie dog</name>
    <dbReference type="NCBI Taxonomy" id="99825"/>
</organismHost>
<organismHost>
    <name type="scientific">Cynomys ludovicianus</name>
    <name type="common">Black-tailed prairie dog</name>
    <dbReference type="NCBI Taxonomy" id="45480"/>
</organismHost>
<organismHost>
    <name type="scientific">Cynomys mexicanus</name>
    <name type="common">Mexican prairie dog</name>
    <dbReference type="NCBI Taxonomy" id="99826"/>
</organismHost>
<organismHost>
    <name type="scientific">Cynomys parvidens</name>
    <name type="common">Utah prairie dog</name>
    <dbReference type="NCBI Taxonomy" id="99827"/>
</organismHost>
<organismHost>
    <name type="scientific">Gliridae</name>
    <name type="common">dormice</name>
    <dbReference type="NCBI Taxonomy" id="30650"/>
</organismHost>
<organismHost>
    <name type="scientific">Heliosciurus ruwenzorii</name>
    <name type="common">Ruwenzori sun squirrel</name>
    <dbReference type="NCBI Taxonomy" id="226685"/>
</organismHost>
<organismHost>
    <name type="scientific">Homo sapiens</name>
    <name type="common">Human</name>
    <dbReference type="NCBI Taxonomy" id="9606"/>
</organismHost>
<organismHost>
    <name type="scientific">Mus musculus</name>
    <name type="common">Mouse</name>
    <dbReference type="NCBI Taxonomy" id="10090"/>
</organismHost>
<feature type="chain" id="PRO_0000457611" description="B1 kinase">
    <location>
        <begin position="1"/>
        <end position="303"/>
    </location>
</feature>
<name>PG187_MONPV</name>
<dbReference type="EC" id="2.7.11.1"/>
<dbReference type="EMBL" id="MT903340">
    <property type="protein sequence ID" value="QNP13032.1"/>
    <property type="molecule type" value="Genomic_DNA"/>
</dbReference>
<dbReference type="RefSeq" id="YP_010377159.1">
    <property type="nucleotide sequence ID" value="NC_063383.1"/>
</dbReference>
<dbReference type="SMR" id="A0A7H0DNE9"/>
<dbReference type="GeneID" id="72551573"/>
<dbReference type="Proteomes" id="UP000516359">
    <property type="component" value="Genome"/>
</dbReference>
<dbReference type="GO" id="GO:0030430">
    <property type="term" value="C:host cell cytoplasm"/>
    <property type="evidence" value="ECO:0007669"/>
    <property type="project" value="UniProtKB-SubCell"/>
</dbReference>
<dbReference type="GO" id="GO:0044423">
    <property type="term" value="C:virion component"/>
    <property type="evidence" value="ECO:0007669"/>
    <property type="project" value="UniProtKB-KW"/>
</dbReference>
<dbReference type="GO" id="GO:0005524">
    <property type="term" value="F:ATP binding"/>
    <property type="evidence" value="ECO:0007669"/>
    <property type="project" value="UniProtKB-KW"/>
</dbReference>
<dbReference type="GO" id="GO:0004674">
    <property type="term" value="F:protein serine/threonine kinase activity"/>
    <property type="evidence" value="ECO:0007669"/>
    <property type="project" value="UniProtKB-KW"/>
</dbReference>
<dbReference type="Gene3D" id="1.10.510.10">
    <property type="entry name" value="Transferase(Phosphotransferase) domain 1"/>
    <property type="match status" value="1"/>
</dbReference>
<dbReference type="InterPro" id="IPR050235">
    <property type="entry name" value="CK1_Ser-Thr_kinase"/>
</dbReference>
<dbReference type="InterPro" id="IPR011009">
    <property type="entry name" value="Kinase-like_dom_sf"/>
</dbReference>
<dbReference type="InterPro" id="IPR000719">
    <property type="entry name" value="Prot_kinase_dom"/>
</dbReference>
<dbReference type="InterPro" id="IPR008271">
    <property type="entry name" value="Ser/Thr_kinase_AS"/>
</dbReference>
<dbReference type="PANTHER" id="PTHR11909">
    <property type="entry name" value="CASEIN KINASE-RELATED"/>
    <property type="match status" value="1"/>
</dbReference>
<dbReference type="Pfam" id="PF00069">
    <property type="entry name" value="Pkinase"/>
    <property type="match status" value="1"/>
</dbReference>
<dbReference type="SMART" id="SM00220">
    <property type="entry name" value="S_TKc"/>
    <property type="match status" value="1"/>
</dbReference>
<dbReference type="SUPFAM" id="SSF56112">
    <property type="entry name" value="Protein kinase-like (PK-like)"/>
    <property type="match status" value="1"/>
</dbReference>
<dbReference type="PROSITE" id="PS50011">
    <property type="entry name" value="PROTEIN_KINASE_DOM"/>
    <property type="match status" value="1"/>
</dbReference>
<dbReference type="PROSITE" id="PS00108">
    <property type="entry name" value="PROTEIN_KINASE_ST"/>
    <property type="match status" value="1"/>
</dbReference>
<proteinExistence type="evidence at transcript level"/>
<reference key="1">
    <citation type="journal article" date="2022" name="J. Infect. Dis.">
        <title>Exportation of Monkeypox virus from the African continent.</title>
        <authorList>
            <person name="Mauldin M.R."/>
            <person name="McCollum A.M."/>
            <person name="Nakazawa Y.J."/>
            <person name="Mandra A."/>
            <person name="Whitehouse E.R."/>
            <person name="Davidson W."/>
            <person name="Zhao H."/>
            <person name="Gao J."/>
            <person name="Li Y."/>
            <person name="Doty J."/>
            <person name="Yinka-Ogunleye A."/>
            <person name="Akinpelu A."/>
            <person name="Aruna O."/>
            <person name="Naidoo D."/>
            <person name="Lewandowski K."/>
            <person name="Afrough B."/>
            <person name="Graham V."/>
            <person name="Aarons E."/>
            <person name="Hewson R."/>
            <person name="Vipond R."/>
            <person name="Dunning J."/>
            <person name="Chand M."/>
            <person name="Brown C."/>
            <person name="Cohen-Gihon I."/>
            <person name="Erez N."/>
            <person name="Shifman O."/>
            <person name="Israeli O."/>
            <person name="Sharon M."/>
            <person name="Schwartz E."/>
            <person name="Beth-Din A."/>
            <person name="Zvi A."/>
            <person name="Mak T.M."/>
            <person name="Ng Y.K."/>
            <person name="Cui L."/>
            <person name="Lin R.T.P."/>
            <person name="Olson V.A."/>
            <person name="Brooks T."/>
            <person name="Paran N."/>
            <person name="Ihekweazu C."/>
            <person name="Reynolds M.G."/>
        </authorList>
    </citation>
    <scope>NUCLEOTIDE SEQUENCE [LARGE SCALE GENOMIC DNA]</scope>
    <source>
        <strain>MPXV-M5312_HM12_Rivers</strain>
    </source>
</reference>
<evidence type="ECO:0000250" key="1">
    <source>
        <dbReference type="UniProtKB" id="P16913"/>
    </source>
</evidence>
<accession>A0A7H0DNE9</accession>
<protein>
    <recommendedName>
        <fullName>B1 kinase</fullName>
    </recommendedName>
    <alternativeName>
        <fullName>Serine/threonine-protein kinase 1</fullName>
        <ecNumber>2.7.11.1</ecNumber>
    </alternativeName>
    <alternativeName>
        <fullName>Vaccinia protein kinase 1</fullName>
    </alternativeName>
</protein>
<sequence>MKFQGLVLIDNCKNQWVVGPLIGKGGFGSIYTTNDNNYVVKIEPKANGSLFTEQAFYTRVLKPSVIEEWKKSHNIKHVGLITCKAFGLYKSINVEYRFLVINRLGADLDAVIRANNNRLPERSVMLIGIEILNTIQFMHEQGYSHGDIKASNIVLDQIDKNKLYLVDYGLVSKFMSNGEHVPFIRNPNKMDNGTLEFTPIDSHKGYVVSRRGDLETLGYCMIRWLGGILPWTKISETKNSALVSAAKQKYVNNTATLLMTSLQYAPRELLQYITMVNSLTYFEEPNYDEFRRVLMNGVMKNFC</sequence>
<keyword id="KW-0067">ATP-binding</keyword>
<keyword id="KW-0244">Early protein</keyword>
<keyword id="KW-1035">Host cytoplasm</keyword>
<keyword id="KW-0418">Kinase</keyword>
<keyword id="KW-0460">Magnesium</keyword>
<keyword id="KW-0547">Nucleotide-binding</keyword>
<keyword id="KW-0597">Phosphoprotein</keyword>
<keyword id="KW-1185">Reference proteome</keyword>
<keyword id="KW-0723">Serine/threonine-protein kinase</keyword>
<keyword id="KW-0808">Transferase</keyword>
<keyword id="KW-1188">Viral release from host cell</keyword>
<keyword id="KW-0946">Virion</keyword>
<gene>
    <name type="primary">OPG187</name>
    <name type="synonym">VPK1</name>
    <name type="ORF">MPXVgp164</name>
</gene>
<comment type="function">
    <text evidence="1">Essential serine/threonine-protein kinase that plays different role in the viral life cycle. Phosphorylates the host small ribosomal protein RACK1 thereby customizing the ribosomes to a state optimal for viral mRNAs (which contain poly-A leaders) but not for host mRNAs. Facilitates viral DNA replication by inhibiting host BANF1, a cellular host defense responsive to foreign DNA. Phosphorylates host BANF1 on serine and threonine residues; this leads to BANF1 relocalization to the cytoplasm, loss of dimerization and impaired DNA binding activity. Indeed, BANF1 activity depends on its DNA-binding property which is blocked by VPK1-mediated phosphorylation. Required for viral intermediate genes expression, probably by inhibiting host BANF1. Modulates cellular responses via host JUN by two different mechanisms, either by direct phosphorylation or by modulation of upstream JIP1-MAPK complexes. Seems to participate in the accumulation/processing of late proteins and thus in virion maturation. In addition, inhibits B12 repressive activity on viral DNA replication via a phosphorylation-dependent mechanism.</text>
</comment>
<comment type="catalytic activity">
    <reaction evidence="1">
        <text>L-seryl-[protein] + ATP = O-phospho-L-seryl-[protein] + ADP + H(+)</text>
        <dbReference type="Rhea" id="RHEA:17989"/>
        <dbReference type="Rhea" id="RHEA-COMP:9863"/>
        <dbReference type="Rhea" id="RHEA-COMP:11604"/>
        <dbReference type="ChEBI" id="CHEBI:15378"/>
        <dbReference type="ChEBI" id="CHEBI:29999"/>
        <dbReference type="ChEBI" id="CHEBI:30616"/>
        <dbReference type="ChEBI" id="CHEBI:83421"/>
        <dbReference type="ChEBI" id="CHEBI:456216"/>
        <dbReference type="EC" id="2.7.11.1"/>
    </reaction>
</comment>
<comment type="catalytic activity">
    <reaction evidence="1">
        <text>L-threonyl-[protein] + ATP = O-phospho-L-threonyl-[protein] + ADP + H(+)</text>
        <dbReference type="Rhea" id="RHEA:46608"/>
        <dbReference type="Rhea" id="RHEA-COMP:11060"/>
        <dbReference type="Rhea" id="RHEA-COMP:11605"/>
        <dbReference type="ChEBI" id="CHEBI:15378"/>
        <dbReference type="ChEBI" id="CHEBI:30013"/>
        <dbReference type="ChEBI" id="CHEBI:30616"/>
        <dbReference type="ChEBI" id="CHEBI:61977"/>
        <dbReference type="ChEBI" id="CHEBI:456216"/>
        <dbReference type="EC" id="2.7.11.1"/>
    </reaction>
</comment>
<comment type="cofactor">
    <cofactor evidence="1">
        <name>Mg(2+)</name>
        <dbReference type="ChEBI" id="CHEBI:18420"/>
    </cofactor>
</comment>
<comment type="subunit">
    <text evidence="1">Interacts with host JIP1; this interaction increases the amount of MAPK bound to JIP1 and subsequently increases the activity of transcription factors, such as JUN, that respond to these complexes. Interacts with protein OPG198; this interaction inhibits the repressive activity of OPG198 pseudokinase on viral replication factory formation.</text>
</comment>
<comment type="subcellular location">
    <subcellularLocation>
        <location evidence="1">Virion</location>
    </subcellularLocation>
    <subcellularLocation>
        <location evidence="1">Host cytoplasm</location>
    </subcellularLocation>
    <text evidence="1">Localizes in cytoplasmic viral factories and is a minor component of the virion.</text>
</comment>
<comment type="induction">
    <text>Expressed in the early phase of the viral replicative cycle.</text>
</comment>
<comment type="PTM">
    <text evidence="1">Autophosphorylated.</text>
</comment>
<comment type="similarity">
    <text>Belongs to the protein kinase superfamily. Ser/Thr protein kinase family. Poxviruses subfamily.</text>
</comment>
<organism>
    <name type="scientific">Monkeypox virus</name>
    <dbReference type="NCBI Taxonomy" id="10244"/>
    <lineage>
        <taxon>Viruses</taxon>
        <taxon>Varidnaviria</taxon>
        <taxon>Bamfordvirae</taxon>
        <taxon>Nucleocytoviricota</taxon>
        <taxon>Pokkesviricetes</taxon>
        <taxon>Chitovirales</taxon>
        <taxon>Poxviridae</taxon>
        <taxon>Chordopoxvirinae</taxon>
        <taxon>Orthopoxvirus</taxon>
    </lineage>
</organism>